<feature type="signal peptide" evidence="17">
    <location>
        <begin position="1"/>
        <end position="17"/>
    </location>
</feature>
<feature type="chain" id="PRO_0000026692" description="Tumor necrosis factor-inducible gene 6 protein">
    <location>
        <begin position="18"/>
        <end position="277"/>
    </location>
</feature>
<feature type="domain" description="Link" evidence="3">
    <location>
        <begin position="36"/>
        <end position="129"/>
    </location>
</feature>
<feature type="domain" description="CUB" evidence="2">
    <location>
        <begin position="135"/>
        <end position="247"/>
    </location>
</feature>
<feature type="binding site" evidence="14 20">
    <location>
        <position position="183"/>
    </location>
    <ligand>
        <name>Ca(2+)</name>
        <dbReference type="ChEBI" id="CHEBI:29108"/>
    </ligand>
</feature>
<feature type="binding site" evidence="14 20">
    <location>
        <position position="191"/>
    </location>
    <ligand>
        <name>Ca(2+)</name>
        <dbReference type="ChEBI" id="CHEBI:29108"/>
    </ligand>
</feature>
<feature type="binding site" evidence="14 20">
    <location>
        <position position="232"/>
    </location>
    <ligand>
        <name>Ca(2+)</name>
        <dbReference type="ChEBI" id="CHEBI:29108"/>
    </ligand>
</feature>
<feature type="binding site" evidence="14 20">
    <location>
        <position position="234"/>
    </location>
    <ligand>
        <name>Ca(2+)</name>
        <dbReference type="ChEBI" id="CHEBI:29108"/>
    </ligand>
</feature>
<feature type="binding site" evidence="14 20">
    <location>
        <position position="235"/>
    </location>
    <ligand>
        <name>Ca(2+)</name>
        <dbReference type="ChEBI" id="CHEBI:29108"/>
    </ligand>
</feature>
<feature type="glycosylation site" description="N-linked (GlcNAc...) asparagine" evidence="1">
    <location>
        <position position="118"/>
    </location>
</feature>
<feature type="glycosylation site" description="N-linked (GlcNAc...) asparagine" evidence="1">
    <location>
        <position position="258"/>
    </location>
</feature>
<feature type="disulfide bond" evidence="3">
    <location>
        <begin position="58"/>
        <end position="127"/>
    </location>
</feature>
<feature type="disulfide bond" evidence="3">
    <location>
        <begin position="82"/>
        <end position="103"/>
    </location>
</feature>
<feature type="disulfide bond" evidence="2">
    <location>
        <begin position="135"/>
        <end position="161"/>
    </location>
</feature>
<feature type="disulfide bond" evidence="2">
    <location>
        <begin position="188"/>
        <end position="210"/>
    </location>
</feature>
<feature type="sequence variant" id="VAR_013005" description="In dbSNP:rs1046668." evidence="5 9">
    <original>Q</original>
    <variation>R</variation>
    <location>
        <position position="144"/>
    </location>
</feature>
<feature type="mutagenesis site" description="Decreases binding of hyaluronan to CD44. Decreases hyaluronan-dependent lymphocyte rolling." evidence="4">
    <original>H</original>
    <variation>K</variation>
    <location>
        <position position="39"/>
    </location>
</feature>
<feature type="mutagenesis site" description="Has no significant effect on hyaluronan binding to CD44 or hyaluronan-dependent lymphocyte rolling." evidence="4">
    <original>E</original>
    <variation>K</variation>
    <location>
        <position position="41"/>
    </location>
</feature>
<feature type="mutagenesis site" description="Abolishes binding to bikunin." evidence="6">
    <original>K</original>
    <variation>Q</variation>
    <location>
        <position position="46"/>
    </location>
</feature>
<feature type="mutagenesis site" description="Abolishes binding to bikunin. Impairs binding to hyaluronan. Retains the ability to bind heavy chains but cannot transfer them onto hyaluronan. Impairs binding of hyaluronan to CD44. Decreases hyaluronan-dependent lymphocyte rolling." evidence="4 6 14">
    <original>Y</original>
    <variation>F</variation>
    <location>
        <position position="47"/>
    </location>
</feature>
<feature type="mutagenesis site" description="Decreases binding of hyaluronan to CD44. Decreases hyaluronan-dependent lymphocyte rolling." evidence="4">
    <original>K</original>
    <variation>E</variation>
    <location>
        <position position="48"/>
    </location>
</feature>
<feature type="mutagenesis site" description="Decreases binding to heparin. Has normal binding to bikunin. Impairs binding to heparin; when associated with A-69 and A-76. Has no effect on CXCL8-induced neutrophil transmigration; when associated with A-69 and A-76." evidence="6 13">
    <original>K</original>
    <variation>A</variation>
    <location>
        <position position="55"/>
    </location>
</feature>
<feature type="mutagenesis site" description="Increases binding of hyaluronan to CD44. Has no significant effect on hyaluronan-dependent lymphocyte rolling." evidence="4">
    <original>H</original>
    <variation>K</variation>
    <location>
        <position position="64"/>
    </location>
</feature>
<feature type="mutagenesis site" description="Decreases binding to heparin. Has normal binding to bikunin. Impairs binding to heparin; when associated with A-55 and A-76. Has no effect on CXCL8-induced neutrophil transmigration; when associated with A-55 and A-76." evidence="6 13">
    <original>K</original>
    <variation>A</variation>
    <location>
        <position position="69"/>
    </location>
</feature>
<feature type="mutagenesis site" description="Decreases binding to heparin. Has normal binding to bikunin. Impairs binding to heparin and decreases the potentiation effect toward bikunin antiprotease activity; when associated with A-55 and A-69. Has no effect on CXCL8-induced neutrophil transmigration; when associated with A-55 and A-69." evidence="6 13">
    <original>K</original>
    <variation>A</variation>
    <location>
        <position position="76"/>
    </location>
</feature>
<feature type="mutagenesis site" description="Decreases binding to heparin. Has normal binding to bikunin." evidence="6">
    <original>K</original>
    <variation>A</variation>
    <location>
        <position position="89"/>
    </location>
</feature>
<feature type="mutagenesis site" description="Abolishes binding to bikunin. Has no effect on transesterification reaction." evidence="6 14">
    <original>Y</original>
    <variation>F</variation>
    <location>
        <position position="94"/>
    </location>
</feature>
<feature type="mutagenesis site" description="Impairs binding of hyaluronan to CD44. Decreases hyaluronan-dependent lymphocyte rolling." evidence="4">
    <original>F</original>
    <variation>V</variation>
    <location>
        <position position="105"/>
    </location>
</feature>
<feature type="mutagenesis site" description="Abolishes binding to bikunin. Impairs binding of hyaluronan to CD44. Decreases hyaluronan-dependent lymphocyte rolling. Has no effect on transesterification reaction." evidence="4 6 14">
    <original>Y</original>
    <variation>F</variation>
    <location>
        <position position="113"/>
    </location>
</feature>
<feature type="mutagenesis site" description="Reduces the binding affinity to calcium ions. Abolishes the interaction with heavy chain ITIH1." evidence="14">
    <original>E</original>
    <variation>S</variation>
    <location>
        <position position="183"/>
    </location>
</feature>
<feature type="strand" evidence="22">
    <location>
        <begin position="37"/>
        <end position="40"/>
    </location>
</feature>
<feature type="strand" evidence="21">
    <location>
        <begin position="42"/>
        <end position="44"/>
    </location>
</feature>
<feature type="strand" evidence="22">
    <location>
        <begin position="45"/>
        <end position="47"/>
    </location>
</feature>
<feature type="helix" evidence="22">
    <location>
        <begin position="51"/>
        <end position="60"/>
    </location>
</feature>
<feature type="helix" evidence="22">
    <location>
        <begin position="68"/>
        <end position="76"/>
    </location>
</feature>
<feature type="strand" evidence="21">
    <location>
        <begin position="85"/>
        <end position="87"/>
    </location>
</feature>
<feature type="helix" evidence="22">
    <location>
        <begin position="88"/>
        <end position="90"/>
    </location>
</feature>
<feature type="strand" evidence="22">
    <location>
        <begin position="91"/>
        <end position="97"/>
    </location>
</feature>
<feature type="turn" evidence="21">
    <location>
        <begin position="101"/>
        <end position="103"/>
    </location>
</feature>
<feature type="strand" evidence="22">
    <location>
        <begin position="109"/>
        <end position="115"/>
    </location>
</feature>
<feature type="strand" evidence="22">
    <location>
        <begin position="123"/>
        <end position="128"/>
    </location>
</feature>
<feature type="strand" evidence="23">
    <location>
        <begin position="137"/>
        <end position="139"/>
    </location>
</feature>
<feature type="strand" evidence="23">
    <location>
        <begin position="141"/>
        <end position="147"/>
    </location>
</feature>
<feature type="turn" evidence="23">
    <location>
        <begin position="149"/>
        <end position="152"/>
    </location>
</feature>
<feature type="strand" evidence="23">
    <location>
        <begin position="160"/>
        <end position="166"/>
    </location>
</feature>
<feature type="strand" evidence="23">
    <location>
        <begin position="172"/>
        <end position="181"/>
    </location>
</feature>
<feature type="strand" evidence="23">
    <location>
        <begin position="190"/>
        <end position="209"/>
    </location>
</feature>
<feature type="strand" evidence="23">
    <location>
        <begin position="211"/>
        <end position="213"/>
    </location>
</feature>
<feature type="strand" evidence="23">
    <location>
        <begin position="221"/>
        <end position="230"/>
    </location>
</feature>
<feature type="strand" evidence="23">
    <location>
        <begin position="239"/>
        <end position="247"/>
    </location>
</feature>
<sequence>MIILIYLFLLLWEDTQGWGFKDGIFHNSIWLERAAGVYHREARSGKYKLTYAEAKAVCEFEGGHLATYKQLEAARKIGFHVCAAGWMAKGRVGYPIVKPGPNCGFGKTGIIDYGIRLNRSERWDAYCYNPHAKECGGVFTDPKQIFKSPGFPNEYEDNQICYWHIRLKYGQRIHLSFLDFDLEDDPGCLADYVEIYDSYDDVHGFVGRYCGDELPDDIISTGNVMTLKFLSDASVTAGGFQIKYVAMDPVSKSSQGKNTSTTSTGNKNFLAGRFSHL</sequence>
<reference key="1">
    <citation type="journal article" date="1992" name="J. Cell Biol.">
        <title>A novel secretory tumor necrosis factor-inducible protein (TSG-6) is a member of the family of hyaluronate binding proteins, closely related to the adhesion receptor CD44.</title>
        <authorList>
            <person name="Lee T.H."/>
            <person name="Wisniewski H.-G."/>
            <person name="Vilcek J."/>
        </authorList>
    </citation>
    <scope>NUCLEOTIDE SEQUENCE [MRNA]</scope>
    <scope>VARIANT ARG-144</scope>
    <scope>INDUCTION BY TNF</scope>
    <scope>SUBCELLULAR LOCATION</scope>
    <scope>PTM</scope>
    <source>
        <tissue>Fibroblast</tissue>
    </source>
</reference>
<reference key="2">
    <citation type="journal article" date="2002" name="J. Biol. Chem.">
        <title>A novel allelic variant of the human TSG-6 gene encoding an amino acid difference in the CUB module. Chromosomal localization, frequency analysis, modeling, and expression.</title>
        <authorList>
            <person name="Nentwich H.A."/>
            <person name="Mustafa Z."/>
            <person name="Rugg M.S."/>
            <person name="Marsden B.D."/>
            <person name="Cordell M.R."/>
            <person name="Mahoney D.J."/>
            <person name="Jenkins S.C."/>
            <person name="Dowling B."/>
            <person name="Fries E."/>
            <person name="Milner C.M."/>
            <person name="Loughlin J."/>
            <person name="Day A.J."/>
        </authorList>
    </citation>
    <scope>NUCLEOTIDE SEQUENCE [MRNA]</scope>
</reference>
<reference key="3">
    <citation type="journal article" date="2005" name="Nature">
        <title>Generation and annotation of the DNA sequences of human chromosomes 2 and 4.</title>
        <authorList>
            <person name="Hillier L.W."/>
            <person name="Graves T.A."/>
            <person name="Fulton R.S."/>
            <person name="Fulton L.A."/>
            <person name="Pepin K.H."/>
            <person name="Minx P."/>
            <person name="Wagner-McPherson C."/>
            <person name="Layman D."/>
            <person name="Wylie K."/>
            <person name="Sekhon M."/>
            <person name="Becker M.C."/>
            <person name="Fewell G.A."/>
            <person name="Delehaunty K.D."/>
            <person name="Miner T.L."/>
            <person name="Nash W.E."/>
            <person name="Kremitzki C."/>
            <person name="Oddy L."/>
            <person name="Du H."/>
            <person name="Sun H."/>
            <person name="Bradshaw-Cordum H."/>
            <person name="Ali J."/>
            <person name="Carter J."/>
            <person name="Cordes M."/>
            <person name="Harris A."/>
            <person name="Isak A."/>
            <person name="van Brunt A."/>
            <person name="Nguyen C."/>
            <person name="Du F."/>
            <person name="Courtney L."/>
            <person name="Kalicki J."/>
            <person name="Ozersky P."/>
            <person name="Abbott S."/>
            <person name="Armstrong J."/>
            <person name="Belter E.A."/>
            <person name="Caruso L."/>
            <person name="Cedroni M."/>
            <person name="Cotton M."/>
            <person name="Davidson T."/>
            <person name="Desai A."/>
            <person name="Elliott G."/>
            <person name="Erb T."/>
            <person name="Fronick C."/>
            <person name="Gaige T."/>
            <person name="Haakenson W."/>
            <person name="Haglund K."/>
            <person name="Holmes A."/>
            <person name="Harkins R."/>
            <person name="Kim K."/>
            <person name="Kruchowski S.S."/>
            <person name="Strong C.M."/>
            <person name="Grewal N."/>
            <person name="Goyea E."/>
            <person name="Hou S."/>
            <person name="Levy A."/>
            <person name="Martinka S."/>
            <person name="Mead K."/>
            <person name="McLellan M.D."/>
            <person name="Meyer R."/>
            <person name="Randall-Maher J."/>
            <person name="Tomlinson C."/>
            <person name="Dauphin-Kohlberg S."/>
            <person name="Kozlowicz-Reilly A."/>
            <person name="Shah N."/>
            <person name="Swearengen-Shahid S."/>
            <person name="Snider J."/>
            <person name="Strong J.T."/>
            <person name="Thompson J."/>
            <person name="Yoakum M."/>
            <person name="Leonard S."/>
            <person name="Pearman C."/>
            <person name="Trani L."/>
            <person name="Radionenko M."/>
            <person name="Waligorski J.E."/>
            <person name="Wang C."/>
            <person name="Rock S.M."/>
            <person name="Tin-Wollam A.-M."/>
            <person name="Maupin R."/>
            <person name="Latreille P."/>
            <person name="Wendl M.C."/>
            <person name="Yang S.-P."/>
            <person name="Pohl C."/>
            <person name="Wallis J.W."/>
            <person name="Spieth J."/>
            <person name="Bieri T.A."/>
            <person name="Berkowicz N."/>
            <person name="Nelson J.O."/>
            <person name="Osborne J."/>
            <person name="Ding L."/>
            <person name="Meyer R."/>
            <person name="Sabo A."/>
            <person name="Shotland Y."/>
            <person name="Sinha P."/>
            <person name="Wohldmann P.E."/>
            <person name="Cook L.L."/>
            <person name="Hickenbotham M.T."/>
            <person name="Eldred J."/>
            <person name="Williams D."/>
            <person name="Jones T.A."/>
            <person name="She X."/>
            <person name="Ciccarelli F.D."/>
            <person name="Izaurralde E."/>
            <person name="Taylor J."/>
            <person name="Schmutz J."/>
            <person name="Myers R.M."/>
            <person name="Cox D.R."/>
            <person name="Huang X."/>
            <person name="McPherson J.D."/>
            <person name="Mardis E.R."/>
            <person name="Clifton S.W."/>
            <person name="Warren W.C."/>
            <person name="Chinwalla A.T."/>
            <person name="Eddy S.R."/>
            <person name="Marra M.A."/>
            <person name="Ovcharenko I."/>
            <person name="Furey T.S."/>
            <person name="Miller W."/>
            <person name="Eichler E.E."/>
            <person name="Bork P."/>
            <person name="Suyama M."/>
            <person name="Torrents D."/>
            <person name="Waterston R.H."/>
            <person name="Wilson R.K."/>
        </authorList>
    </citation>
    <scope>NUCLEOTIDE SEQUENCE [LARGE SCALE GENOMIC DNA]</scope>
</reference>
<reference key="4">
    <citation type="submission" date="2005-09" db="EMBL/GenBank/DDBJ databases">
        <authorList>
            <person name="Mural R.J."/>
            <person name="Istrail S."/>
            <person name="Sutton G.G."/>
            <person name="Florea L."/>
            <person name="Halpern A.L."/>
            <person name="Mobarry C.M."/>
            <person name="Lippert R."/>
            <person name="Walenz B."/>
            <person name="Shatkay H."/>
            <person name="Dew I."/>
            <person name="Miller J.R."/>
            <person name="Flanigan M.J."/>
            <person name="Edwards N.J."/>
            <person name="Bolanos R."/>
            <person name="Fasulo D."/>
            <person name="Halldorsson B.V."/>
            <person name="Hannenhalli S."/>
            <person name="Turner R."/>
            <person name="Yooseph S."/>
            <person name="Lu F."/>
            <person name="Nusskern D.R."/>
            <person name="Shue B.C."/>
            <person name="Zheng X.H."/>
            <person name="Zhong F."/>
            <person name="Delcher A.L."/>
            <person name="Huson D.H."/>
            <person name="Kravitz S.A."/>
            <person name="Mouchard L."/>
            <person name="Reinert K."/>
            <person name="Remington K.A."/>
            <person name="Clark A.G."/>
            <person name="Waterman M.S."/>
            <person name="Eichler E.E."/>
            <person name="Adams M.D."/>
            <person name="Hunkapiller M.W."/>
            <person name="Myers E.W."/>
            <person name="Venter J.C."/>
        </authorList>
    </citation>
    <scope>NUCLEOTIDE SEQUENCE [LARGE SCALE GENOMIC DNA]</scope>
</reference>
<reference key="5">
    <citation type="journal article" date="2004" name="Genome Res.">
        <title>The status, quality, and expansion of the NIH full-length cDNA project: the Mammalian Gene Collection (MGC).</title>
        <authorList>
            <consortium name="The MGC Project Team"/>
        </authorList>
    </citation>
    <scope>NUCLEOTIDE SEQUENCE [LARGE SCALE MRNA]</scope>
    <scope>VARIANT ARG-144</scope>
    <source>
        <tissue>Lung</tissue>
        <tissue>Spleen</tissue>
    </source>
</reference>
<reference key="6">
    <citation type="journal article" date="1994" name="Biochemistry">
        <title>TSG-6, an arthritis-associated hyaluronan binding protein, forms a stable complex with the serum protein inter-alpha-inhibitor.</title>
        <authorList>
            <person name="Wisniewski H.-G."/>
            <person name="Burgess W.H."/>
            <person name="Oppenheim J.D."/>
            <person name="Vilcek J."/>
        </authorList>
    </citation>
    <scope>PROTEIN SEQUENCE OF 18-27</scope>
    <scope>TISSUE SPECIFICITY</scope>
    <scope>INTERACTION WITH INTER-ALPHA-INHIBITOR</scope>
</reference>
<reference key="7">
    <citation type="journal article" date="2004" name="J. Biol. Chem.">
        <title>TSG-6 modulates the interaction between hyaluronan and cell surface CD44.</title>
        <authorList>
            <person name="Lesley J."/>
            <person name="Gal I."/>
            <person name="Mahoney D.J."/>
            <person name="Cordell M.R."/>
            <person name="Rugg M.S."/>
            <person name="Hyman R."/>
            <person name="Day A.J."/>
            <person name="Mikecz K."/>
        </authorList>
    </citation>
    <scope>FUNCTION</scope>
    <scope>DOMAIN</scope>
    <scope>MUTAGENESIS OF HIS-39; GLU-41; TYR-47; LYS-48; HIS-64; PHE-105 AND TYR-113</scope>
</reference>
<reference key="8">
    <citation type="journal article" date="2005" name="J. Biol. Chem.">
        <title>Characterization of the interaction between tumor necrosis factor-stimulated gene-6 and heparin: implications for the inhibition of plasmin in extracellular matrix microenvironments.</title>
        <authorList>
            <person name="Mahoney D.J."/>
            <person name="Mulloy B."/>
            <person name="Forster M.J."/>
            <person name="Blundell C.D."/>
            <person name="Fries E."/>
            <person name="Milner C.M."/>
            <person name="Day A.J."/>
        </authorList>
    </citation>
    <scope>FUNCTION</scope>
    <scope>INTERACTION WITH BIKUNIN</scope>
    <scope>DOMAIN</scope>
    <scope>MUTAGENESIS OF LYS-46; TYR-47; LYS-55; LYS-69; LYS-76; LYS-89; TYR-94 AND TYR-113</scope>
</reference>
<reference key="9">
    <citation type="journal article" date="2006" name="Biochem. J.">
        <title>Tumour necrosis factor alpha-stimulated gene-6 inhibits osteoblastic differentiation of human mesenchymal stem cells induced by osteogenic differentiation medium and BMP-2.</title>
        <authorList>
            <person name="Tsukahara S."/>
            <person name="Ikeda R."/>
            <person name="Goto S."/>
            <person name="Yoshida K."/>
            <person name="Mitsumori R."/>
            <person name="Sakamoto Y."/>
            <person name="Tajima A."/>
            <person name="Yokoyama T."/>
            <person name="Toh S."/>
            <person name="Furukawa K."/>
            <person name="Inoue I."/>
        </authorList>
    </citation>
    <scope>FUNCTION</scope>
    <scope>TISSUE SPECIFICITY</scope>
    <scope>INDUCTION</scope>
    <scope>INTERACTION WITH BMP2</scope>
</reference>
<reference key="10">
    <citation type="journal article" date="2007" name="Am. J. Respir. Cell Mol. Biol.">
        <title>TSG-6 potentiates the antitissue kallikrein activity of inter-alpha-inhibitor through bikunin release.</title>
        <authorList>
            <person name="Forteza R."/>
            <person name="Casalino-Matsuda S.M."/>
            <person name="Monzon M.E."/>
            <person name="Fries E."/>
            <person name="Rugg M.S."/>
            <person name="Milner C.M."/>
            <person name="Day A.J."/>
        </authorList>
    </citation>
    <scope>FUNCTION</scope>
    <scope>TISSUE SPECIFICITY</scope>
    <scope>INDUCTION BY TNF</scope>
</reference>
<reference key="11">
    <citation type="journal article" date="2008" name="J. Biol. Chem.">
        <title>TSG-6 regulates bone remodeling through inhibition of osteoblastogenesis and osteoclast activation.</title>
        <authorList>
            <person name="Mahoney D.J."/>
            <person name="Mikecz K."/>
            <person name="Ali T."/>
            <person name="Mabilleau G."/>
            <person name="Benayahu D."/>
            <person name="Plaas A."/>
            <person name="Milner C.M."/>
            <person name="Day A.J."/>
            <person name="Sabokbar A."/>
        </authorList>
    </citation>
    <scope>FUNCTION</scope>
    <scope>INTERACTION WITH TNFSF11</scope>
</reference>
<reference key="12">
    <citation type="journal article" date="2008" name="Matrix Biol.">
        <title>TSG-6 binds via its CUB_C domain to the cell-binding domain of fibronectin and increases fibronectin matrix assembly.</title>
        <authorList>
            <person name="Kuznetsova S.A."/>
            <person name="Mahoney D.J."/>
            <person name="Martin-Manso G."/>
            <person name="Ali T."/>
            <person name="Nentwich H.A."/>
            <person name="Sipes J.M."/>
            <person name="Zeng B."/>
            <person name="Vogel T."/>
            <person name="Day A.J."/>
            <person name="Roberts D.D."/>
        </authorList>
    </citation>
    <scope>FUNCTION</scope>
    <scope>DOMAIN</scope>
    <scope>INTERACTION WITH FN1</scope>
</reference>
<reference key="13">
    <citation type="journal article" date="2010" name="J. Biol. Chem.">
        <title>The TSG-6/HC2-mediated transfer is a dynamic process shuffling heavy chains between glycosaminoglycans.</title>
        <authorList>
            <person name="Sanggaard K.W."/>
            <person name="Scavenius C."/>
            <person name="Rasmussen A.J."/>
            <person name="Wisniewski H.G."/>
            <person name="Thoegersen I.B."/>
            <person name="Enghild J.J."/>
        </authorList>
    </citation>
    <scope>FUNCTION</scope>
    <scope>SUBUNIT</scope>
</reference>
<reference key="14">
    <citation type="journal article" date="2014" name="J. Immunol.">
        <title>TSG-6 inhibits neutrophil migration via direct interaction with the chemokine CXCL8.</title>
        <authorList>
            <person name="Dyer D.P."/>
            <person name="Thomson J.M."/>
            <person name="Hermant A."/>
            <person name="Jowitt T.A."/>
            <person name="Handel T.M."/>
            <person name="Proudfoot A.E."/>
            <person name="Day A.J."/>
            <person name="Milner C.M."/>
        </authorList>
    </citation>
    <scope>FUNCTION</scope>
    <scope>INTERACTION WITH CXCL8</scope>
    <scope>MUTAGENESIS OF LYS-55; LYS-69 AND LYS-76</scope>
</reference>
<reference key="15">
    <citation type="journal article" date="2016" name="J. Biol. Chem.">
        <title>Binding of Hyaluronan to the Native Lymphatic Vessel Endothelial Receptor LYVE-1 Is Critically Dependent on Receptor Clustering and Hyaluronan Organization.</title>
        <authorList>
            <person name="Lawrance W."/>
            <person name="Banerji S."/>
            <person name="Day A.J."/>
            <person name="Bhattacharjee S."/>
            <person name="Jackson D.G."/>
        </authorList>
    </citation>
    <scope>FUNCTION</scope>
</reference>
<reference key="16">
    <citation type="journal article" date="2016" name="J. Biol. Chem.">
        <title>The Anti-inflammatory Protein TSG-6 Regulates Chemokine Function by Inhibiting Chemokine/Glycosaminoglycan Interactions.</title>
        <authorList>
            <person name="Dyer D.P."/>
            <person name="Salanga C.L."/>
            <person name="Johns S.C."/>
            <person name="Valdambrini E."/>
            <person name="Fuster M.M."/>
            <person name="Milner C.M."/>
            <person name="Day A.J."/>
            <person name="Handel T.M."/>
        </authorList>
    </citation>
    <scope>FUNCTION</scope>
    <scope>INTERACTION WITH PF4; CXCL11; CXCL12; CCL2; CCL7; CCL19; CCL21 AND CCL27</scope>
    <scope>DOMAIN</scope>
</reference>
<reference key="17">
    <citation type="journal article" date="1996" name="Cell">
        <title>Solution structure of the link module: a hyaluronan-binding domain involved in extracellular matrix stability and cell migration.</title>
        <authorList>
            <person name="Kohda D."/>
            <person name="Morton C.J."/>
            <person name="Parkar A.A."/>
            <person name="Hatanaka H."/>
            <person name="Inagaki F.M."/>
            <person name="Campbell I.D."/>
            <person name="Day A.J."/>
        </authorList>
    </citation>
    <scope>STRUCTURE BY NMR OF 36-133</scope>
</reference>
<reference key="18">
    <citation type="journal article" date="2015" name="J. Biol. Chem.">
        <title>Metal Ion-dependent Heavy Chain Transfer Activity of TSG-6 Mediates Assembly of the Cumulus-Oocyte Matrix.</title>
        <authorList>
            <person name="Briggs D.C."/>
            <person name="Birchenough H.L."/>
            <person name="Ali T."/>
            <person name="Rugg M.S."/>
            <person name="Waltho J.P."/>
            <person name="Ievoli E."/>
            <person name="Jowitt T.A."/>
            <person name="Enghild J.J."/>
            <person name="Richter R.P."/>
            <person name="Salustri A."/>
            <person name="Milner C.M."/>
            <person name="Day A.J."/>
        </authorList>
    </citation>
    <scope>X-RAY CRYSTALLOGRAPHY (2.30 ANGSTROMS) OF 129-277 IN COMPLEX WITH CALCIUM</scope>
    <scope>FUNCTION</scope>
    <scope>BIOPHYSICOCHEMICAL PROPERTIES</scope>
    <scope>DOMAIN</scope>
    <scope>INTERACTION WITH ITIH1</scope>
    <scope>MUTAGENESIS OF TYR-47; TYR-94; TYR-113 AND GLU-183</scope>
</reference>
<dbReference type="EC" id="3.1.1.-" evidence="19"/>
<dbReference type="EMBL" id="M31165">
    <property type="protein sequence ID" value="AAB00792.1"/>
    <property type="molecule type" value="mRNA"/>
</dbReference>
<dbReference type="EMBL" id="AJ421518">
    <property type="protein sequence ID" value="CAD13434.1"/>
    <property type="molecule type" value="mRNA"/>
</dbReference>
<dbReference type="EMBL" id="AJ419936">
    <property type="protein sequence ID" value="CAD12353.1"/>
    <property type="molecule type" value="mRNA"/>
</dbReference>
<dbReference type="EMBL" id="AC009311">
    <property type="protein sequence ID" value="AAY15067.1"/>
    <property type="molecule type" value="Genomic_DNA"/>
</dbReference>
<dbReference type="EMBL" id="CH471058">
    <property type="protein sequence ID" value="EAX11511.1"/>
    <property type="molecule type" value="Genomic_DNA"/>
</dbReference>
<dbReference type="EMBL" id="BC030205">
    <property type="protein sequence ID" value="AAH30205.1"/>
    <property type="molecule type" value="mRNA"/>
</dbReference>
<dbReference type="CCDS" id="CCDS2193.1"/>
<dbReference type="PIR" id="A41735">
    <property type="entry name" value="A41735"/>
</dbReference>
<dbReference type="RefSeq" id="NP_009046.2">
    <property type="nucleotide sequence ID" value="NM_007115.3"/>
</dbReference>
<dbReference type="PDB" id="1O7B">
    <property type="method" value="NMR"/>
    <property type="chains" value="T=36-133"/>
</dbReference>
<dbReference type="PDB" id="1O7C">
    <property type="method" value="NMR"/>
    <property type="chains" value="T=36-133"/>
</dbReference>
<dbReference type="PDB" id="2N40">
    <property type="method" value="NMR"/>
    <property type="chains" value="A=36-133"/>
</dbReference>
<dbReference type="PDB" id="2PF5">
    <property type="method" value="X-ray"/>
    <property type="resolution" value="1.90 A"/>
    <property type="chains" value="A/B/C/D/E=36-133"/>
</dbReference>
<dbReference type="PDB" id="2WNO">
    <property type="method" value="X-ray"/>
    <property type="resolution" value="2.30 A"/>
    <property type="chains" value="A=129-277"/>
</dbReference>
<dbReference type="PDBsum" id="1O7B"/>
<dbReference type="PDBsum" id="1O7C"/>
<dbReference type="PDBsum" id="2N40"/>
<dbReference type="PDBsum" id="2PF5"/>
<dbReference type="PDBsum" id="2WNO"/>
<dbReference type="BMRB" id="P98066"/>
<dbReference type="SMR" id="P98066"/>
<dbReference type="BioGRID" id="112984">
    <property type="interactions" value="28"/>
</dbReference>
<dbReference type="FunCoup" id="P98066">
    <property type="interactions" value="146"/>
</dbReference>
<dbReference type="IntAct" id="P98066">
    <property type="interactions" value="46"/>
</dbReference>
<dbReference type="STRING" id="9606.ENSP00000243347"/>
<dbReference type="DrugBank" id="DB00945">
    <property type="generic name" value="Acetylsalicylic acid"/>
</dbReference>
<dbReference type="DrugBank" id="DB00843">
    <property type="generic name" value="Donepezil"/>
</dbReference>
<dbReference type="DrugBank" id="DB08818">
    <property type="generic name" value="Hyaluronic acid"/>
</dbReference>
<dbReference type="GlyCosmos" id="P98066">
    <property type="glycosylation" value="2 sites, No reported glycans"/>
</dbReference>
<dbReference type="GlyGen" id="P98066">
    <property type="glycosylation" value="2 sites"/>
</dbReference>
<dbReference type="iPTMnet" id="P98066"/>
<dbReference type="PhosphoSitePlus" id="P98066"/>
<dbReference type="BioMuta" id="TNFAIP6"/>
<dbReference type="DMDM" id="68067717"/>
<dbReference type="MassIVE" id="P98066"/>
<dbReference type="PaxDb" id="9606-ENSP00000243347"/>
<dbReference type="PeptideAtlas" id="P98066"/>
<dbReference type="ProteomicsDB" id="57783"/>
<dbReference type="Antibodypedia" id="33651">
    <property type="antibodies" value="193 antibodies from 32 providers"/>
</dbReference>
<dbReference type="DNASU" id="7130"/>
<dbReference type="Ensembl" id="ENST00000243347.5">
    <property type="protein sequence ID" value="ENSP00000243347.3"/>
    <property type="gene ID" value="ENSG00000123610.5"/>
</dbReference>
<dbReference type="GeneID" id="7130"/>
<dbReference type="KEGG" id="hsa:7130"/>
<dbReference type="MANE-Select" id="ENST00000243347.5">
    <property type="protein sequence ID" value="ENSP00000243347.3"/>
    <property type="RefSeq nucleotide sequence ID" value="NM_007115.4"/>
    <property type="RefSeq protein sequence ID" value="NP_009046.2"/>
</dbReference>
<dbReference type="UCSC" id="uc002txk.3">
    <property type="organism name" value="human"/>
</dbReference>
<dbReference type="AGR" id="HGNC:11898"/>
<dbReference type="CTD" id="7130"/>
<dbReference type="DisGeNET" id="7130"/>
<dbReference type="GeneCards" id="TNFAIP6"/>
<dbReference type="HGNC" id="HGNC:11898">
    <property type="gene designation" value="TNFAIP6"/>
</dbReference>
<dbReference type="HPA" id="ENSG00000123610">
    <property type="expression patterns" value="Tissue enriched (urinary)"/>
</dbReference>
<dbReference type="MalaCards" id="TNFAIP6"/>
<dbReference type="MIM" id="600410">
    <property type="type" value="gene"/>
</dbReference>
<dbReference type="neXtProt" id="NX_P98066"/>
<dbReference type="OpenTargets" id="ENSG00000123610"/>
<dbReference type="PharmGKB" id="PA36595"/>
<dbReference type="VEuPathDB" id="HostDB:ENSG00000123610"/>
<dbReference type="eggNOG" id="KOG1218">
    <property type="taxonomic scope" value="Eukaryota"/>
</dbReference>
<dbReference type="eggNOG" id="KOG3714">
    <property type="taxonomic scope" value="Eukaryota"/>
</dbReference>
<dbReference type="GeneTree" id="ENSGT00940000157201"/>
<dbReference type="HOGENOM" id="CLU_092089_0_0_1"/>
<dbReference type="InParanoid" id="P98066"/>
<dbReference type="OMA" id="IGFHMCA"/>
<dbReference type="OrthoDB" id="6369184at2759"/>
<dbReference type="PAN-GO" id="P98066">
    <property type="GO annotations" value="2 GO annotations based on evolutionary models"/>
</dbReference>
<dbReference type="PhylomeDB" id="P98066"/>
<dbReference type="TreeFam" id="TF334173"/>
<dbReference type="PathwayCommons" id="P98066"/>
<dbReference type="Reactome" id="R-HSA-6798695">
    <property type="pathway name" value="Neutrophil degranulation"/>
</dbReference>
<dbReference type="SignaLink" id="P98066"/>
<dbReference type="SIGNOR" id="P98066"/>
<dbReference type="BioGRID-ORCS" id="7130">
    <property type="hits" value="13 hits in 1155 CRISPR screens"/>
</dbReference>
<dbReference type="ChiTaRS" id="TNFAIP6">
    <property type="organism name" value="human"/>
</dbReference>
<dbReference type="EvolutionaryTrace" id="P98066"/>
<dbReference type="GeneWiki" id="TSG-6"/>
<dbReference type="GenomeRNAi" id="7130"/>
<dbReference type="Pharos" id="P98066">
    <property type="development level" value="Tbio"/>
</dbReference>
<dbReference type="PRO" id="PR:P98066"/>
<dbReference type="Proteomes" id="UP000005640">
    <property type="component" value="Chromosome 2"/>
</dbReference>
<dbReference type="RNAct" id="P98066">
    <property type="molecule type" value="protein"/>
</dbReference>
<dbReference type="Bgee" id="ENSG00000123610">
    <property type="expression patterns" value="Expressed in cartilage tissue and 163 other cell types or tissues"/>
</dbReference>
<dbReference type="GO" id="GO:0005576">
    <property type="term" value="C:extracellular region"/>
    <property type="evidence" value="ECO:0000314"/>
    <property type="project" value="UniProtKB"/>
</dbReference>
<dbReference type="GO" id="GO:0005615">
    <property type="term" value="C:extracellular space"/>
    <property type="evidence" value="ECO:0000318"/>
    <property type="project" value="GO_Central"/>
</dbReference>
<dbReference type="GO" id="GO:1904813">
    <property type="term" value="C:ficolin-1-rich granule lumen"/>
    <property type="evidence" value="ECO:0000304"/>
    <property type="project" value="Reactome"/>
</dbReference>
<dbReference type="GO" id="GO:1904724">
    <property type="term" value="C:tertiary granule lumen"/>
    <property type="evidence" value="ECO:0000304"/>
    <property type="project" value="Reactome"/>
</dbReference>
<dbReference type="GO" id="GO:0005509">
    <property type="term" value="F:calcium ion binding"/>
    <property type="evidence" value="ECO:0000314"/>
    <property type="project" value="UniProtKB"/>
</dbReference>
<dbReference type="GO" id="GO:0106435">
    <property type="term" value="F:carboxylesterase activity"/>
    <property type="evidence" value="ECO:0000314"/>
    <property type="project" value="UniProtKB"/>
</dbReference>
<dbReference type="GO" id="GO:0001968">
    <property type="term" value="F:fibronectin binding"/>
    <property type="evidence" value="ECO:0000314"/>
    <property type="project" value="UniProtKB"/>
</dbReference>
<dbReference type="GO" id="GO:0005540">
    <property type="term" value="F:hyaluronic acid binding"/>
    <property type="evidence" value="ECO:0000314"/>
    <property type="project" value="UniProtKB"/>
</dbReference>
<dbReference type="GO" id="GO:0007155">
    <property type="term" value="P:cell adhesion"/>
    <property type="evidence" value="ECO:0007669"/>
    <property type="project" value="UniProtKB-KW"/>
</dbReference>
<dbReference type="GO" id="GO:0007267">
    <property type="term" value="P:cell-cell signaling"/>
    <property type="evidence" value="ECO:0000304"/>
    <property type="project" value="ProtInc"/>
</dbReference>
<dbReference type="GO" id="GO:1905590">
    <property type="term" value="P:fibronectin fibril organization"/>
    <property type="evidence" value="ECO:0000314"/>
    <property type="project" value="UniProtKB"/>
</dbReference>
<dbReference type="GO" id="GO:0030212">
    <property type="term" value="P:hyaluronan metabolic process"/>
    <property type="evidence" value="ECO:0000314"/>
    <property type="project" value="UniProtKB"/>
</dbReference>
<dbReference type="GO" id="GO:0006954">
    <property type="term" value="P:inflammatory response"/>
    <property type="evidence" value="ECO:0000304"/>
    <property type="project" value="ProtInc"/>
</dbReference>
<dbReference type="GO" id="GO:0030514">
    <property type="term" value="P:negative regulation of BMP signaling pathway"/>
    <property type="evidence" value="ECO:0000314"/>
    <property type="project" value="UniProtKB"/>
</dbReference>
<dbReference type="GO" id="GO:0050728">
    <property type="term" value="P:negative regulation of inflammatory response"/>
    <property type="evidence" value="ECO:0000314"/>
    <property type="project" value="CACAO"/>
</dbReference>
<dbReference type="GO" id="GO:0090024">
    <property type="term" value="P:negative regulation of neutrophil chemotaxis"/>
    <property type="evidence" value="ECO:0000314"/>
    <property type="project" value="UniProtKB"/>
</dbReference>
<dbReference type="GO" id="GO:0045668">
    <property type="term" value="P:negative regulation of osteoblast differentiation"/>
    <property type="evidence" value="ECO:0000314"/>
    <property type="project" value="UniProtKB"/>
</dbReference>
<dbReference type="GO" id="GO:0045671">
    <property type="term" value="P:negative regulation of osteoclast differentiation"/>
    <property type="evidence" value="ECO:0000314"/>
    <property type="project" value="UniProtKB"/>
</dbReference>
<dbReference type="GO" id="GO:0001550">
    <property type="term" value="P:ovarian cumulus expansion"/>
    <property type="evidence" value="ECO:0000250"/>
    <property type="project" value="UniProtKB"/>
</dbReference>
<dbReference type="GO" id="GO:0030335">
    <property type="term" value="P:positive regulation of cell migration"/>
    <property type="evidence" value="ECO:0007669"/>
    <property type="project" value="Ensembl"/>
</dbReference>
<dbReference type="GO" id="GO:1903911">
    <property type="term" value="P:positive regulation of receptor clustering"/>
    <property type="evidence" value="ECO:0000314"/>
    <property type="project" value="UniProtKB"/>
</dbReference>
<dbReference type="GO" id="GO:0007165">
    <property type="term" value="P:signal transduction"/>
    <property type="evidence" value="ECO:0000304"/>
    <property type="project" value="ProtInc"/>
</dbReference>
<dbReference type="CDD" id="cd00041">
    <property type="entry name" value="CUB"/>
    <property type="match status" value="1"/>
</dbReference>
<dbReference type="CDD" id="cd03515">
    <property type="entry name" value="Link_domain_TSG_6_like"/>
    <property type="match status" value="1"/>
</dbReference>
<dbReference type="FunFam" id="3.10.100.10:FF:000001">
    <property type="entry name" value="Hyaluronan proteoglycan link protein 1"/>
    <property type="match status" value="1"/>
</dbReference>
<dbReference type="FunFam" id="2.60.120.290:FF:000005">
    <property type="entry name" value="Procollagen C-endopeptidase enhancer 1"/>
    <property type="match status" value="1"/>
</dbReference>
<dbReference type="Gene3D" id="3.10.100.10">
    <property type="entry name" value="Mannose-Binding Protein A, subunit A"/>
    <property type="match status" value="1"/>
</dbReference>
<dbReference type="Gene3D" id="2.60.120.290">
    <property type="entry name" value="Spermadhesin, CUB domain"/>
    <property type="match status" value="1"/>
</dbReference>
<dbReference type="InterPro" id="IPR016186">
    <property type="entry name" value="C-type_lectin-like/link_sf"/>
</dbReference>
<dbReference type="InterPro" id="IPR016187">
    <property type="entry name" value="CTDL_fold"/>
</dbReference>
<dbReference type="InterPro" id="IPR000859">
    <property type="entry name" value="CUB_dom"/>
</dbReference>
<dbReference type="InterPro" id="IPR000538">
    <property type="entry name" value="Link_dom"/>
</dbReference>
<dbReference type="InterPro" id="IPR035914">
    <property type="entry name" value="Sperma_CUB_dom_sf"/>
</dbReference>
<dbReference type="InterPro" id="IPR052129">
    <property type="entry name" value="Spermadhesin-Link_domain"/>
</dbReference>
<dbReference type="PANTHER" id="PTHR46908">
    <property type="entry name" value="CUBILIN-LIKE PROTEIN"/>
    <property type="match status" value="1"/>
</dbReference>
<dbReference type="PANTHER" id="PTHR46908:SF4">
    <property type="entry name" value="TUMOR NECROSIS FACTOR-INDUCIBLE GENE 6 PROTEIN"/>
    <property type="match status" value="1"/>
</dbReference>
<dbReference type="Pfam" id="PF00431">
    <property type="entry name" value="CUB"/>
    <property type="match status" value="1"/>
</dbReference>
<dbReference type="Pfam" id="PF00193">
    <property type="entry name" value="Xlink"/>
    <property type="match status" value="1"/>
</dbReference>
<dbReference type="PRINTS" id="PR01265">
    <property type="entry name" value="LINKMODULE"/>
</dbReference>
<dbReference type="SMART" id="SM00042">
    <property type="entry name" value="CUB"/>
    <property type="match status" value="1"/>
</dbReference>
<dbReference type="SMART" id="SM00445">
    <property type="entry name" value="LINK"/>
    <property type="match status" value="1"/>
</dbReference>
<dbReference type="SUPFAM" id="SSF56436">
    <property type="entry name" value="C-type lectin-like"/>
    <property type="match status" value="1"/>
</dbReference>
<dbReference type="SUPFAM" id="SSF49854">
    <property type="entry name" value="Spermadhesin, CUB domain"/>
    <property type="match status" value="1"/>
</dbReference>
<dbReference type="PROSITE" id="PS01180">
    <property type="entry name" value="CUB"/>
    <property type="match status" value="1"/>
</dbReference>
<dbReference type="PROSITE" id="PS01241">
    <property type="entry name" value="LINK_1"/>
    <property type="match status" value="1"/>
</dbReference>
<dbReference type="PROSITE" id="PS50963">
    <property type="entry name" value="LINK_2"/>
    <property type="match status" value="1"/>
</dbReference>
<evidence type="ECO:0000255" key="1"/>
<evidence type="ECO:0000255" key="2">
    <source>
        <dbReference type="PROSITE-ProRule" id="PRU00059"/>
    </source>
</evidence>
<evidence type="ECO:0000255" key="3">
    <source>
        <dbReference type="PROSITE-ProRule" id="PRU00323"/>
    </source>
</evidence>
<evidence type="ECO:0000269" key="4">
    <source>
    </source>
</evidence>
<evidence type="ECO:0000269" key="5">
    <source>
    </source>
</evidence>
<evidence type="ECO:0000269" key="6">
    <source>
    </source>
</evidence>
<evidence type="ECO:0000269" key="7">
    <source>
    </source>
</evidence>
<evidence type="ECO:0000269" key="8">
    <source>
    </source>
</evidence>
<evidence type="ECO:0000269" key="9">
    <source>
    </source>
</evidence>
<evidence type="ECO:0000269" key="10">
    <source>
    </source>
</evidence>
<evidence type="ECO:0000269" key="11">
    <source>
    </source>
</evidence>
<evidence type="ECO:0000269" key="12">
    <source>
    </source>
</evidence>
<evidence type="ECO:0000269" key="13">
    <source>
    </source>
</evidence>
<evidence type="ECO:0000269" key="14">
    <source>
    </source>
</evidence>
<evidence type="ECO:0000269" key="15">
    <source>
    </source>
</evidence>
<evidence type="ECO:0000269" key="16">
    <source>
    </source>
</evidence>
<evidence type="ECO:0000269" key="17">
    <source>
    </source>
</evidence>
<evidence type="ECO:0000303" key="18">
    <source>
    </source>
</evidence>
<evidence type="ECO:0000305" key="19">
    <source>
    </source>
</evidence>
<evidence type="ECO:0007744" key="20">
    <source>
        <dbReference type="PDB" id="2WNO"/>
    </source>
</evidence>
<evidence type="ECO:0007829" key="21">
    <source>
        <dbReference type="PDB" id="1O7B"/>
    </source>
</evidence>
<evidence type="ECO:0007829" key="22">
    <source>
        <dbReference type="PDB" id="2PF5"/>
    </source>
</evidence>
<evidence type="ECO:0007829" key="23">
    <source>
        <dbReference type="PDB" id="2WNO"/>
    </source>
</evidence>
<gene>
    <name type="primary">TNFAIP6</name>
    <name type="synonym">TSG6</name>
</gene>
<proteinExistence type="evidence at protein level"/>
<name>TSG6_HUMAN</name>
<comment type="function">
    <text evidence="4 6 7 8 10 11 12 13 14 15 16">Major regulator of extracellular matrix organization during tissue remodeling (PubMed:15917224, PubMed:18042364, PubMed:26823460). Catalyzes the transfer of a heavy chain (HC) from inter-alpha-inhibitor (I-alpha-I) complex to hyaluronan. Cleaves the ester bond between the C-terminus of the HC and GalNAc residue of the chondroitin sulfate chain in I-alpha-I complex followed by transesterification of the HC to hyaluronan. In the process, potentiates the antiprotease function of I-alpha-I complex through release of free bikunin (PubMed:15917224, PubMed:16873769, PubMed:20463016). Acts as a catalyst in the formation of hyaluronan-HC oligomers and hyaluronan-rich matrix surrounding the cumulus cell-oocyte complex, a necessary step for oocyte fertilization (PubMed:26468290). Assembles hyaluronan in pericellular matrices that serve as platforms for receptor clustering and signaling. Enables binding of hyaluronan deposited on the surface of macrophages to LYVE1 on lymphatic endothelium and facilitates macrophage extravasation. Alters hyaluronan binding to functionally latent CD44 on vascular endothelium, switching CD44 into an active state that supports leukocyte rolling (PubMed:15060082, PubMed:26823460). Modulates the interaction of chemokines with extracellular matrix components and proteoglycans on endothelial cell surface, likely preventing chemokine gradient formation (PubMed:27044744). In a negative feedback mechanism, may limit excessive neutrophil recruitment at inflammatory sites by antagonizing the association of CXCL8 with glycosaminoglycans on vascular endothelium (PubMed:24501198). Has a role in osteogenesis and bone remodeling. Inhibits BMP2-dependent differentiation of mesenchymal stem cell to osteoblasts (PubMed:16771708, PubMed:18586671). Protects against bone erosion during inflammation by inhibiting TNFSF11/RANKL-dependent osteoclast activation (PubMed:18586671).</text>
</comment>
<comment type="biophysicochemical properties">
    <phDependence>
        <text evidence="14">Optimally active at pH 6.5-8.</text>
    </phDependence>
</comment>
<comment type="subunit">
    <text evidence="6 7 10 11 12 13 14 16 17">Interacts (via Link domain) with inter-alpha-inhibitor (I-alpha-I) component bikunin (PubMed:15917224). Interacts with ITIH2/HC2; this interaction is required for transesterification of the HC to hyaluronan (PubMed:20463016). Interacts (via Link and CUB domains) with ITIH1 (PubMed:26468290). Chondroitin sulfate may be required for the stability of the complex (PubMed:7516184). Interacts (via Link domain) with various C-X-C and C-C chemokines including PF4, CXCL8, CXCL11, CXCL12, CCL2, CCL7, CCL19, CCL21, and CCL27; this interaction interferes with chemokine binding to glycosaminoglycans (PubMed:24501198, PubMed:27044744). Interacts (primarily via Link domain) with BMP2; this interaction is inhibited by hyaluronan (PubMed:16771708). Interacts (via both Link and CUB domains) with TNFSF11 (PubMed:18586671). Interacts (via CUB domain) with FN1 (via type III repeats 9-14); this interaction enhances fibronectin fibril assembly. TNFAIP6 may act as a bridging molecule between FN1 and THBS1 (PubMed:18042364).</text>
</comment>
<comment type="interaction">
    <interactant intactId="EBI-11700693">
        <id>P98066</id>
    </interactant>
    <interactant intactId="EBI-9697918">
        <id>PRO_0000033825</id>
        <label>BMP2</label>
        <dbReference type="UniProtKB" id="P12643"/>
    </interactant>
    <organismsDiffer>false</organismsDiffer>
    <experiments>3</experiments>
</comment>
<comment type="interaction">
    <interactant intactId="EBI-11700693">
        <id>P98066</id>
    </interactant>
    <interactant intactId="EBI-11711510">
        <id>PRO_0000005214</id>
        <label>CCL19</label>
        <dbReference type="UniProtKB" id="Q99731"/>
    </interactant>
    <organismsDiffer>false</organismsDiffer>
    <experiments>2</experiments>
</comment>
<comment type="interaction">
    <interactant intactId="EBI-11700693">
        <id>P98066</id>
    </interactant>
    <interactant intactId="EBI-11711396">
        <id>PRO_0000005146</id>
        <label>CCL2</label>
        <dbReference type="UniProtKB" id="P13500"/>
    </interactant>
    <organismsDiffer>false</organismsDiffer>
    <experiments>2</experiments>
</comment>
<comment type="interaction">
    <interactant intactId="EBI-11700693">
        <id>P98066</id>
    </interactant>
    <interactant intactId="EBI-11711410">
        <id>PRO_0000005183</id>
        <label>CCL7</label>
        <dbReference type="UniProtKB" id="P80098"/>
    </interactant>
    <organismsDiffer>false</organismsDiffer>
    <experiments>2</experiments>
</comment>
<comment type="interaction">
    <interactant intactId="EBI-11700693">
        <id>P98066</id>
    </interactant>
    <interactant intactId="EBI-11711364">
        <id>PRO_0000005106</id>
        <label>CXCL11</label>
        <dbReference type="UniProtKB" id="O14625"/>
    </interactant>
    <organismsDiffer>false</organismsDiffer>
    <experiments>2</experiments>
</comment>
<comment type="interaction">
    <interactant intactId="EBI-11700693">
        <id>P98066</id>
    </interactant>
    <interactant intactId="EBI-3917999">
        <id>P10145</id>
        <label>CXCL8</label>
    </interactant>
    <organismsDiffer>false</organismsDiffer>
    <experiments>15</experiments>
</comment>
<comment type="interaction">
    <interactant intactId="EBI-11700693">
        <id>P98066</id>
    </interactant>
    <interactant intactId="EBI-1220319">
        <id>P02751</id>
        <label>FN1</label>
    </interactant>
    <organismsDiffer>false</organismsDiffer>
    <experiments>8</experiments>
</comment>
<comment type="interaction">
    <interactant intactId="EBI-11700693">
        <id>P98066</id>
    </interactant>
    <interactant intactId="EBI-11710512">
        <id>PRO_0000033913</id>
        <label>GDF5</label>
        <dbReference type="UniProtKB" id="P43026"/>
    </interactant>
    <organismsDiffer>false</organismsDiffer>
    <experiments>3</experiments>
</comment>
<comment type="interaction">
    <interactant intactId="EBI-11700693">
        <id>P98066</id>
    </interactant>
    <interactant intactId="EBI-11710019">
        <id>PRO_0000042253</id>
        <label>GDF6</label>
        <dbReference type="UniProtKB" id="Q6KF10"/>
    </interactant>
    <organismsDiffer>false</organismsDiffer>
    <experiments>3</experiments>
</comment>
<comment type="interaction">
    <interactant intactId="EBI-11700693">
        <id>P98066</id>
    </interactant>
    <interactant intactId="EBI-11574553">
        <id>P26022</id>
        <label>PTX3</label>
    </interactant>
    <organismsDiffer>false</organismsDiffer>
    <experiments>8</experiments>
</comment>
<comment type="interaction">
    <interactant intactId="EBI-11700693">
        <id>P98066</id>
    </interactant>
    <interactant intactId="EBI-7404021">
        <id>O14788</id>
        <label>TNFSF11</label>
    </interactant>
    <organismsDiffer>false</organismsDiffer>
    <experiments>4</experiments>
</comment>
<comment type="subcellular location">
    <subcellularLocation>
        <location evidence="9">Secreted</location>
    </subcellularLocation>
</comment>
<comment type="tissue specificity">
    <text evidence="7 8 17">Expressed in airway epithelium and submucosal gland (at protein level). Colocalizes with bikunin at the ciliary border. Present in bronchoalveolar lavage fluid (at protein level) (PubMed:16873769). Expressed in mesenchymal stem cells (PubMed:16771708). Found in the synovial fluid of patients with rheumatoid arthritis.</text>
</comment>
<comment type="induction">
    <text evidence="7 8 9">Up-regulated in peripheral blood mononuclear cells, high endothelial venules, airway epithelium and submucosal gland in response to inflammatory cytokine TNF (PubMed:16873769, PubMed:1730767). Down-regulated upon differentiation of mesenchymal stem cells to osteoblasts (PubMed:16771708).</text>
</comment>
<comment type="domain">
    <text evidence="4 6 16">The Link domain interacts with various extracellular matrix components, including heparin, heparan sulfates, hyaluronan and I-alpha-I complex (PubMed:15060082, PubMed:15917224). It is required for binding to various chemokines (PubMed:27044744).</text>
</comment>
<comment type="domain">
    <text evidence="10 14">The CUB domain is necessary for calcium ion binding and transesterification reaction (PubMed:26468290). It is required for binding to FN1 (PubMed:18042364).</text>
</comment>
<comment type="PTM">
    <text evidence="9">N-glycosylated.</text>
</comment>
<keyword id="KW-0002">3D-structure</keyword>
<keyword id="KW-0106">Calcium</keyword>
<keyword id="KW-0130">Cell adhesion</keyword>
<keyword id="KW-0903">Direct protein sequencing</keyword>
<keyword id="KW-1015">Disulfide bond</keyword>
<keyword id="KW-0325">Glycoprotein</keyword>
<keyword id="KW-0378">Hydrolase</keyword>
<keyword id="KW-0479">Metal-binding</keyword>
<keyword id="KW-1267">Proteomics identification</keyword>
<keyword id="KW-1185">Reference proteome</keyword>
<keyword id="KW-0964">Secreted</keyword>
<keyword id="KW-0732">Signal</keyword>
<accession>P98066</accession>
<accession>Q53TI7</accession>
<accession>Q8WWI9</accession>
<organism>
    <name type="scientific">Homo sapiens</name>
    <name type="common">Human</name>
    <dbReference type="NCBI Taxonomy" id="9606"/>
    <lineage>
        <taxon>Eukaryota</taxon>
        <taxon>Metazoa</taxon>
        <taxon>Chordata</taxon>
        <taxon>Craniata</taxon>
        <taxon>Vertebrata</taxon>
        <taxon>Euteleostomi</taxon>
        <taxon>Mammalia</taxon>
        <taxon>Eutheria</taxon>
        <taxon>Euarchontoglires</taxon>
        <taxon>Primates</taxon>
        <taxon>Haplorrhini</taxon>
        <taxon>Catarrhini</taxon>
        <taxon>Hominidae</taxon>
        <taxon>Homo</taxon>
    </lineage>
</organism>
<protein>
    <recommendedName>
        <fullName>Tumor necrosis factor-inducible gene 6 protein</fullName>
        <ecNumber evidence="19">3.1.1.-</ecNumber>
    </recommendedName>
    <alternativeName>
        <fullName>Hyaluronate-binding protein</fullName>
    </alternativeName>
    <alternativeName>
        <fullName>TNF-stimulated gene 6 protein</fullName>
        <shortName evidence="18">TSG-6</shortName>
    </alternativeName>
    <alternativeName>
        <fullName>Tumor necrosis factor alpha-induced protein 6</fullName>
        <shortName>TNF alpha-induced protein 6</shortName>
    </alternativeName>
</protein>